<dbReference type="EMBL" id="X00789">
    <property type="protein sequence ID" value="CAA25367.1"/>
    <property type="molecule type" value="Genomic_DNA"/>
</dbReference>
<dbReference type="PIR" id="A00156">
    <property type="entry name" value="CBZM"/>
</dbReference>
<dbReference type="SMR" id="P04165"/>
<dbReference type="PaxDb" id="4577-GRMZM2G112030_P01"/>
<dbReference type="MaizeGDB" id="69227"/>
<dbReference type="eggNOG" id="KOG4663">
    <property type="taxonomic scope" value="Eukaryota"/>
</dbReference>
<dbReference type="GO" id="GO:0016020">
    <property type="term" value="C:membrane"/>
    <property type="evidence" value="ECO:0000318"/>
    <property type="project" value="GO_Central"/>
</dbReference>
<dbReference type="GO" id="GO:0005743">
    <property type="term" value="C:mitochondrial inner membrane"/>
    <property type="evidence" value="ECO:0007669"/>
    <property type="project" value="UniProtKB-SubCell"/>
</dbReference>
<dbReference type="GO" id="GO:0045275">
    <property type="term" value="C:respiratory chain complex III"/>
    <property type="evidence" value="ECO:0000318"/>
    <property type="project" value="GO_Central"/>
</dbReference>
<dbReference type="GO" id="GO:0046872">
    <property type="term" value="F:metal ion binding"/>
    <property type="evidence" value="ECO:0007669"/>
    <property type="project" value="UniProtKB-KW"/>
</dbReference>
<dbReference type="GO" id="GO:0008121">
    <property type="term" value="F:ubiquinol-cytochrome-c reductase activity"/>
    <property type="evidence" value="ECO:0007669"/>
    <property type="project" value="InterPro"/>
</dbReference>
<dbReference type="GO" id="GO:0006122">
    <property type="term" value="P:mitochondrial electron transport, ubiquinol to cytochrome c"/>
    <property type="evidence" value="ECO:0000318"/>
    <property type="project" value="GO_Central"/>
</dbReference>
<dbReference type="CDD" id="cd00290">
    <property type="entry name" value="cytochrome_b_C"/>
    <property type="match status" value="1"/>
</dbReference>
<dbReference type="CDD" id="cd00284">
    <property type="entry name" value="Cytochrome_b_N"/>
    <property type="match status" value="1"/>
</dbReference>
<dbReference type="FunFam" id="1.20.810.10:FF:000006">
    <property type="entry name" value="Cytochrome b"/>
    <property type="match status" value="1"/>
</dbReference>
<dbReference type="Gene3D" id="1.20.810.10">
    <property type="entry name" value="Cytochrome Bc1 Complex, Chain C"/>
    <property type="match status" value="1"/>
</dbReference>
<dbReference type="InterPro" id="IPR005798">
    <property type="entry name" value="Cyt_b/b6_C"/>
</dbReference>
<dbReference type="InterPro" id="IPR036150">
    <property type="entry name" value="Cyt_b/b6_C_sf"/>
</dbReference>
<dbReference type="InterPro" id="IPR005797">
    <property type="entry name" value="Cyt_b/b6_N"/>
</dbReference>
<dbReference type="InterPro" id="IPR027387">
    <property type="entry name" value="Cytb/b6-like_sf"/>
</dbReference>
<dbReference type="InterPro" id="IPR030689">
    <property type="entry name" value="Cytochrome_b"/>
</dbReference>
<dbReference type="InterPro" id="IPR048260">
    <property type="entry name" value="Cytochrome_b_C_euk/bac"/>
</dbReference>
<dbReference type="InterPro" id="IPR048259">
    <property type="entry name" value="Cytochrome_b_N_euk/bac"/>
</dbReference>
<dbReference type="InterPro" id="IPR016174">
    <property type="entry name" value="Di-haem_cyt_TM"/>
</dbReference>
<dbReference type="PANTHER" id="PTHR19271">
    <property type="entry name" value="CYTOCHROME B"/>
    <property type="match status" value="1"/>
</dbReference>
<dbReference type="PANTHER" id="PTHR19271:SF16">
    <property type="entry name" value="CYTOCHROME B"/>
    <property type="match status" value="1"/>
</dbReference>
<dbReference type="Pfam" id="PF00032">
    <property type="entry name" value="Cytochrom_B_C"/>
    <property type="match status" value="1"/>
</dbReference>
<dbReference type="Pfam" id="PF00033">
    <property type="entry name" value="Cytochrome_B"/>
    <property type="match status" value="1"/>
</dbReference>
<dbReference type="PIRSF" id="PIRSF038885">
    <property type="entry name" value="COB"/>
    <property type="match status" value="1"/>
</dbReference>
<dbReference type="SUPFAM" id="SSF81648">
    <property type="entry name" value="a domain/subunit of cytochrome bc1 complex (Ubiquinol-cytochrome c reductase)"/>
    <property type="match status" value="1"/>
</dbReference>
<dbReference type="SUPFAM" id="SSF81342">
    <property type="entry name" value="Transmembrane di-heme cytochromes"/>
    <property type="match status" value="1"/>
</dbReference>
<dbReference type="PROSITE" id="PS51003">
    <property type="entry name" value="CYTB_CTER"/>
    <property type="match status" value="1"/>
</dbReference>
<dbReference type="PROSITE" id="PS51002">
    <property type="entry name" value="CYTB_NTER"/>
    <property type="match status" value="1"/>
</dbReference>
<organism>
    <name type="scientific">Zea mays</name>
    <name type="common">Maize</name>
    <dbReference type="NCBI Taxonomy" id="4577"/>
    <lineage>
        <taxon>Eukaryota</taxon>
        <taxon>Viridiplantae</taxon>
        <taxon>Streptophyta</taxon>
        <taxon>Embryophyta</taxon>
        <taxon>Tracheophyta</taxon>
        <taxon>Spermatophyta</taxon>
        <taxon>Magnoliopsida</taxon>
        <taxon>Liliopsida</taxon>
        <taxon>Poales</taxon>
        <taxon>Poaceae</taxon>
        <taxon>PACMAD clade</taxon>
        <taxon>Panicoideae</taxon>
        <taxon>Andropogonodae</taxon>
        <taxon>Andropogoneae</taxon>
        <taxon>Tripsacinae</taxon>
        <taxon>Zea</taxon>
    </lineage>
</organism>
<keyword id="KW-0249">Electron transport</keyword>
<keyword id="KW-0349">Heme</keyword>
<keyword id="KW-0408">Iron</keyword>
<keyword id="KW-0472">Membrane</keyword>
<keyword id="KW-0479">Metal-binding</keyword>
<keyword id="KW-0496">Mitochondrion</keyword>
<keyword id="KW-0999">Mitochondrion inner membrane</keyword>
<keyword id="KW-0679">Respiratory chain</keyword>
<keyword id="KW-0812">Transmembrane</keyword>
<keyword id="KW-1133">Transmembrane helix</keyword>
<keyword id="KW-0813">Transport</keyword>
<keyword id="KW-0830">Ubiquinone</keyword>
<comment type="function">
    <text evidence="3">Component of the ubiquinol-cytochrome c reductase complex (complex III or cytochrome b-c1 complex) that is part of the mitochondrial respiratory chain. The b-c1 complex mediates electron transfer from ubiquinol to cytochrome c. Contributes to the generation of a proton gradient across the mitochondrial membrane that is then used for ATP synthesis.</text>
</comment>
<comment type="cofactor">
    <cofactor evidence="3">
        <name>heme b</name>
        <dbReference type="ChEBI" id="CHEBI:60344"/>
    </cofactor>
    <text evidence="3">Binds 2 heme b groups non-covalently.</text>
</comment>
<comment type="subunit">
    <text evidence="1">The main subunits of complex b-c1 are: cytochrome b, cytochrome c1 and the Rieske protein.</text>
</comment>
<comment type="subcellular location">
    <subcellularLocation>
        <location evidence="3">Mitochondrion inner membrane</location>
        <topology evidence="3">Multi-pass membrane protein</topology>
    </subcellularLocation>
</comment>
<comment type="miscellaneous">
    <text evidence="1">Heme 1 (or BL or b562) is low-potential and absorbs at about 562 nm, and heme 2 (or BH or b566) is high-potential and absorbs at about 566 nm.</text>
</comment>
<comment type="similarity">
    <text evidence="4 5">Belongs to the cytochrome b family.</text>
</comment>
<comment type="caution">
    <text evidence="3">The protein contains only eight transmembrane helices, not nine as predicted by bioinformatics tools.</text>
</comment>
<evidence type="ECO:0000250" key="1"/>
<evidence type="ECO:0000250" key="2">
    <source>
        <dbReference type="UniProtKB" id="P00157"/>
    </source>
</evidence>
<evidence type="ECO:0000250" key="3">
    <source>
        <dbReference type="UniProtKB" id="P00163"/>
    </source>
</evidence>
<evidence type="ECO:0000255" key="4">
    <source>
        <dbReference type="PROSITE-ProRule" id="PRU00967"/>
    </source>
</evidence>
<evidence type="ECO:0000255" key="5">
    <source>
        <dbReference type="PROSITE-ProRule" id="PRU00968"/>
    </source>
</evidence>
<name>CYB_MAIZE</name>
<proteinExistence type="inferred from homology"/>
<protein>
    <recommendedName>
        <fullName>Cytochrome b</fullName>
    </recommendedName>
    <alternativeName>
        <fullName>Complex III subunit 3</fullName>
    </alternativeName>
    <alternativeName>
        <fullName>Complex III subunit III</fullName>
    </alternativeName>
    <alternativeName>
        <fullName>Cytochrome b-c1 complex subunit 3</fullName>
    </alternativeName>
    <alternativeName>
        <fullName>Ubiquinol-cytochrome-c reductase complex cytochrome b subunit</fullName>
    </alternativeName>
</protein>
<accession>P04165</accession>
<reference key="1">
    <citation type="journal article" date="1984" name="EMBO J.">
        <title>The apocytochrome b gene in maize mitochondria does not contain introns and is preceded by a potential ribosome binding site.</title>
        <authorList>
            <person name="Dawson A.J."/>
            <person name="Jones V.P."/>
            <person name="Leaver C.J."/>
        </authorList>
    </citation>
    <scope>NUCLEOTIDE SEQUENCE [GENOMIC DNA]</scope>
</reference>
<sequence>MTIRNQRFSLLKQPIYSTLNQHLIDYPTPSNLSYWWGFGCLAGICLVIQIVTGVFLAMHYTPHVDLAFNSVEHIMRDVEGGWLLRYMHANGASMFLIVVHLHIFRGLYHASYSSPREFVWCLGVVIFLLMIVTAFIGYVPPWGQMSFWGATVITSLASAIPVVGDTIVTWLWGGFSVDNATLNRFFSLHHLLPLILAGASLLHLAALHQYGSNNPLGVHSEMDKIASYPYFYVKDLVGRVASAIFFSIWIFFAPNVLGHPDNYIPANPMPTPPHIVPEWYFLPIHAILRSIPDKAGGVAAIAPVFISLLALPFFKEMYVRSSSFRPIHQGIFWLLLADCLLLGWIGCQPVEAPFVTIGQISSFFFFLFFAITPIPGRVGRGIPKYYTE</sequence>
<feature type="chain" id="PRO_0000061149" description="Cytochrome b">
    <location>
        <begin position="1"/>
        <end position="388"/>
    </location>
</feature>
<feature type="transmembrane region" description="Helical" evidence="3">
    <location>
        <begin position="38"/>
        <end position="58"/>
    </location>
</feature>
<feature type="transmembrane region" description="Helical" evidence="3">
    <location>
        <begin position="82"/>
        <end position="104"/>
    </location>
</feature>
<feature type="transmembrane region" description="Helical" evidence="3">
    <location>
        <begin position="119"/>
        <end position="139"/>
    </location>
</feature>
<feature type="transmembrane region" description="Helical" evidence="3">
    <location>
        <begin position="185"/>
        <end position="205"/>
    </location>
</feature>
<feature type="transmembrane region" description="Helical" evidence="3">
    <location>
        <begin position="231"/>
        <end position="251"/>
    </location>
</feature>
<feature type="transmembrane region" description="Helical" evidence="3">
    <location>
        <begin position="295"/>
        <end position="315"/>
    </location>
</feature>
<feature type="transmembrane region" description="Helical" evidence="3">
    <location>
        <begin position="327"/>
        <end position="347"/>
    </location>
</feature>
<feature type="transmembrane region" description="Helical" evidence="3">
    <location>
        <begin position="354"/>
        <end position="373"/>
    </location>
</feature>
<feature type="binding site" description="axial binding residue" evidence="3">
    <location>
        <position position="88"/>
    </location>
    <ligand>
        <name>heme b</name>
        <dbReference type="ChEBI" id="CHEBI:60344"/>
        <label>b562</label>
    </ligand>
    <ligandPart>
        <name>Fe</name>
        <dbReference type="ChEBI" id="CHEBI:18248"/>
    </ligandPart>
</feature>
<feature type="binding site" description="axial binding residue" evidence="3">
    <location>
        <position position="102"/>
    </location>
    <ligand>
        <name>heme b</name>
        <dbReference type="ChEBI" id="CHEBI:60344"/>
        <label>b566</label>
    </ligand>
    <ligandPart>
        <name>Fe</name>
        <dbReference type="ChEBI" id="CHEBI:18248"/>
    </ligandPart>
</feature>
<feature type="binding site" description="axial binding residue" evidence="3">
    <location>
        <position position="189"/>
    </location>
    <ligand>
        <name>heme b</name>
        <dbReference type="ChEBI" id="CHEBI:60344"/>
        <label>b562</label>
    </ligand>
    <ligandPart>
        <name>Fe</name>
        <dbReference type="ChEBI" id="CHEBI:18248"/>
    </ligandPart>
</feature>
<feature type="binding site" description="axial binding residue" evidence="3">
    <location>
        <position position="203"/>
    </location>
    <ligand>
        <name>heme b</name>
        <dbReference type="ChEBI" id="CHEBI:60344"/>
        <label>b566</label>
    </ligand>
    <ligandPart>
        <name>Fe</name>
        <dbReference type="ChEBI" id="CHEBI:18248"/>
    </ligandPart>
</feature>
<feature type="binding site" evidence="2">
    <location>
        <position position="208"/>
    </location>
    <ligand>
        <name>a ubiquinone</name>
        <dbReference type="ChEBI" id="CHEBI:16389"/>
    </ligand>
</feature>
<geneLocation type="mitochondrion"/>
<gene>
    <name type="primary">MT-CYB</name>
    <name type="synonym">COB</name>
    <name type="synonym">CYTB</name>
    <name type="synonym">MTCYB</name>
</gene>